<organism>
    <name type="scientific">Streptococcus pneumoniae (strain ATCC 700669 / Spain 23F-1)</name>
    <dbReference type="NCBI Taxonomy" id="561276"/>
    <lineage>
        <taxon>Bacteria</taxon>
        <taxon>Bacillati</taxon>
        <taxon>Bacillota</taxon>
        <taxon>Bacilli</taxon>
        <taxon>Lactobacillales</taxon>
        <taxon>Streptococcaceae</taxon>
        <taxon>Streptococcus</taxon>
    </lineage>
</organism>
<sequence length="316" mass="34539">MSVREKMLEILEGIDIRFKEPLHSYSYTKVGGEADYLVFPRNRFELARVVKFANQENIPWMVLGNASNIIVRDGGIRGFVILCDKLNNVSVDGYTIEAEAGANLIETTRIALRHSLTGFEFACGIPGSVGGAVFMNAGAYGGEIAHILQSCKVLTKDGEIETLSAKDLAFGYRHSAIQESGAVVLSVKFALAPGTHQVIKQEMDRLTHLRELKQPLEYPSCGSVFKRPVGHFAGQLISEAGLKGYRIGGVEVSEKHAGFMINVADGTAKDYEDLIQSVIEKVKEHSGITLEREVRILGESLSVAKMYAGGFTPCKR</sequence>
<accession>B8ZKN7</accession>
<feature type="chain" id="PRO_1000117141" description="UDP-N-acetylenolpyruvoylglucosamine reductase">
    <location>
        <begin position="1"/>
        <end position="316"/>
    </location>
</feature>
<feature type="domain" description="FAD-binding PCMH-type" evidence="1">
    <location>
        <begin position="30"/>
        <end position="194"/>
    </location>
</feature>
<feature type="active site" evidence="1">
    <location>
        <position position="173"/>
    </location>
</feature>
<feature type="active site" description="Proton donor" evidence="1">
    <location>
        <position position="223"/>
    </location>
</feature>
<feature type="active site" evidence="1">
    <location>
        <position position="293"/>
    </location>
</feature>
<name>MURB_STRPJ</name>
<dbReference type="EC" id="1.3.1.98" evidence="1"/>
<dbReference type="EMBL" id="FM211187">
    <property type="protein sequence ID" value="CAR69154.1"/>
    <property type="molecule type" value="Genomic_DNA"/>
</dbReference>
<dbReference type="RefSeq" id="WP_000116181.1">
    <property type="nucleotide sequence ID" value="NC_011900.1"/>
</dbReference>
<dbReference type="SMR" id="B8ZKN7"/>
<dbReference type="KEGG" id="sne:SPN23F13540"/>
<dbReference type="HOGENOM" id="CLU_035304_1_1_9"/>
<dbReference type="UniPathway" id="UPA00219"/>
<dbReference type="GO" id="GO:0005829">
    <property type="term" value="C:cytosol"/>
    <property type="evidence" value="ECO:0007669"/>
    <property type="project" value="TreeGrafter"/>
</dbReference>
<dbReference type="GO" id="GO:0071949">
    <property type="term" value="F:FAD binding"/>
    <property type="evidence" value="ECO:0007669"/>
    <property type="project" value="InterPro"/>
</dbReference>
<dbReference type="GO" id="GO:0008762">
    <property type="term" value="F:UDP-N-acetylmuramate dehydrogenase activity"/>
    <property type="evidence" value="ECO:0007669"/>
    <property type="project" value="UniProtKB-UniRule"/>
</dbReference>
<dbReference type="GO" id="GO:0051301">
    <property type="term" value="P:cell division"/>
    <property type="evidence" value="ECO:0007669"/>
    <property type="project" value="UniProtKB-KW"/>
</dbReference>
<dbReference type="GO" id="GO:0071555">
    <property type="term" value="P:cell wall organization"/>
    <property type="evidence" value="ECO:0007669"/>
    <property type="project" value="UniProtKB-KW"/>
</dbReference>
<dbReference type="GO" id="GO:0009252">
    <property type="term" value="P:peptidoglycan biosynthetic process"/>
    <property type="evidence" value="ECO:0007669"/>
    <property type="project" value="UniProtKB-UniRule"/>
</dbReference>
<dbReference type="GO" id="GO:0008360">
    <property type="term" value="P:regulation of cell shape"/>
    <property type="evidence" value="ECO:0007669"/>
    <property type="project" value="UniProtKB-KW"/>
</dbReference>
<dbReference type="Gene3D" id="3.30.465.10">
    <property type="match status" value="1"/>
</dbReference>
<dbReference type="Gene3D" id="3.90.78.10">
    <property type="entry name" value="UDP-N-acetylenolpyruvoylglucosamine reductase, C-terminal domain"/>
    <property type="match status" value="1"/>
</dbReference>
<dbReference type="Gene3D" id="3.30.43.10">
    <property type="entry name" value="Uridine Diphospho-n-acetylenolpyruvylglucosamine Reductase, domain 2"/>
    <property type="match status" value="1"/>
</dbReference>
<dbReference type="HAMAP" id="MF_00037">
    <property type="entry name" value="MurB"/>
    <property type="match status" value="1"/>
</dbReference>
<dbReference type="InterPro" id="IPR016166">
    <property type="entry name" value="FAD-bd_PCMH"/>
</dbReference>
<dbReference type="InterPro" id="IPR036318">
    <property type="entry name" value="FAD-bd_PCMH-like_sf"/>
</dbReference>
<dbReference type="InterPro" id="IPR016167">
    <property type="entry name" value="FAD-bd_PCMH_sub1"/>
</dbReference>
<dbReference type="InterPro" id="IPR016169">
    <property type="entry name" value="FAD-bd_PCMH_sub2"/>
</dbReference>
<dbReference type="InterPro" id="IPR003170">
    <property type="entry name" value="MurB"/>
</dbReference>
<dbReference type="InterPro" id="IPR011601">
    <property type="entry name" value="MurB_C"/>
</dbReference>
<dbReference type="InterPro" id="IPR036635">
    <property type="entry name" value="MurB_C_sf"/>
</dbReference>
<dbReference type="InterPro" id="IPR006094">
    <property type="entry name" value="Oxid_FAD_bind_N"/>
</dbReference>
<dbReference type="NCBIfam" id="TIGR00179">
    <property type="entry name" value="murB"/>
    <property type="match status" value="1"/>
</dbReference>
<dbReference type="NCBIfam" id="NF010480">
    <property type="entry name" value="PRK13905.1"/>
    <property type="match status" value="1"/>
</dbReference>
<dbReference type="PANTHER" id="PTHR21071">
    <property type="entry name" value="UDP-N-ACETYLENOLPYRUVOYLGLUCOSAMINE REDUCTASE"/>
    <property type="match status" value="1"/>
</dbReference>
<dbReference type="PANTHER" id="PTHR21071:SF4">
    <property type="entry name" value="UDP-N-ACETYLENOLPYRUVOYLGLUCOSAMINE REDUCTASE"/>
    <property type="match status" value="1"/>
</dbReference>
<dbReference type="Pfam" id="PF01565">
    <property type="entry name" value="FAD_binding_4"/>
    <property type="match status" value="1"/>
</dbReference>
<dbReference type="Pfam" id="PF02873">
    <property type="entry name" value="MurB_C"/>
    <property type="match status" value="1"/>
</dbReference>
<dbReference type="SUPFAM" id="SSF56176">
    <property type="entry name" value="FAD-binding/transporter-associated domain-like"/>
    <property type="match status" value="1"/>
</dbReference>
<dbReference type="SUPFAM" id="SSF56194">
    <property type="entry name" value="Uridine diphospho-N-Acetylenolpyruvylglucosamine reductase, MurB, C-terminal domain"/>
    <property type="match status" value="1"/>
</dbReference>
<dbReference type="PROSITE" id="PS51387">
    <property type="entry name" value="FAD_PCMH"/>
    <property type="match status" value="1"/>
</dbReference>
<proteinExistence type="inferred from homology"/>
<evidence type="ECO:0000255" key="1">
    <source>
        <dbReference type="HAMAP-Rule" id="MF_00037"/>
    </source>
</evidence>
<comment type="function">
    <text evidence="1">Cell wall formation.</text>
</comment>
<comment type="catalytic activity">
    <reaction evidence="1">
        <text>UDP-N-acetyl-alpha-D-muramate + NADP(+) = UDP-N-acetyl-3-O-(1-carboxyvinyl)-alpha-D-glucosamine + NADPH + H(+)</text>
        <dbReference type="Rhea" id="RHEA:12248"/>
        <dbReference type="ChEBI" id="CHEBI:15378"/>
        <dbReference type="ChEBI" id="CHEBI:57783"/>
        <dbReference type="ChEBI" id="CHEBI:58349"/>
        <dbReference type="ChEBI" id="CHEBI:68483"/>
        <dbReference type="ChEBI" id="CHEBI:70757"/>
        <dbReference type="EC" id="1.3.1.98"/>
    </reaction>
</comment>
<comment type="cofactor">
    <cofactor evidence="1">
        <name>FAD</name>
        <dbReference type="ChEBI" id="CHEBI:57692"/>
    </cofactor>
</comment>
<comment type="pathway">
    <text evidence="1">Cell wall biogenesis; peptidoglycan biosynthesis.</text>
</comment>
<comment type="subcellular location">
    <subcellularLocation>
        <location evidence="1">Cytoplasm</location>
    </subcellularLocation>
</comment>
<comment type="similarity">
    <text evidence="1">Belongs to the MurB family.</text>
</comment>
<reference key="1">
    <citation type="journal article" date="2009" name="J. Bacteriol.">
        <title>Role of conjugative elements in the evolution of the multidrug-resistant pandemic clone Streptococcus pneumoniae Spain23F ST81.</title>
        <authorList>
            <person name="Croucher N.J."/>
            <person name="Walker D."/>
            <person name="Romero P."/>
            <person name="Lennard N."/>
            <person name="Paterson G.K."/>
            <person name="Bason N.C."/>
            <person name="Mitchell A.M."/>
            <person name="Quail M.A."/>
            <person name="Andrew P.W."/>
            <person name="Parkhill J."/>
            <person name="Bentley S.D."/>
            <person name="Mitchell T.J."/>
        </authorList>
    </citation>
    <scope>NUCLEOTIDE SEQUENCE [LARGE SCALE GENOMIC DNA]</scope>
    <source>
        <strain>ATCC 700669 / Spain 23F-1</strain>
    </source>
</reference>
<keyword id="KW-0131">Cell cycle</keyword>
<keyword id="KW-0132">Cell division</keyword>
<keyword id="KW-0133">Cell shape</keyword>
<keyword id="KW-0961">Cell wall biogenesis/degradation</keyword>
<keyword id="KW-0963">Cytoplasm</keyword>
<keyword id="KW-0274">FAD</keyword>
<keyword id="KW-0285">Flavoprotein</keyword>
<keyword id="KW-0521">NADP</keyword>
<keyword id="KW-0560">Oxidoreductase</keyword>
<keyword id="KW-0573">Peptidoglycan synthesis</keyword>
<protein>
    <recommendedName>
        <fullName evidence="1">UDP-N-acetylenolpyruvoylglucosamine reductase</fullName>
        <ecNumber evidence="1">1.3.1.98</ecNumber>
    </recommendedName>
    <alternativeName>
        <fullName evidence="1">UDP-N-acetylmuramate dehydrogenase</fullName>
    </alternativeName>
</protein>
<gene>
    <name evidence="1" type="primary">murB</name>
    <name type="ordered locus">SPN23F13540</name>
</gene>